<proteinExistence type="evidence at protein level"/>
<evidence type="ECO:0000250" key="1">
    <source>
        <dbReference type="UniProtKB" id="Q6PE87"/>
    </source>
</evidence>
<evidence type="ECO:0000256" key="2">
    <source>
        <dbReference type="SAM" id="MobiDB-lite"/>
    </source>
</evidence>
<evidence type="ECO:0000305" key="3"/>
<evidence type="ECO:0000312" key="4">
    <source>
        <dbReference type="HGNC" id="HGNC:21405"/>
    </source>
</evidence>
<dbReference type="EMBL" id="AK093830">
    <property type="protein sequence ID" value="BAC04234.1"/>
    <property type="status" value="ALT_SEQ"/>
    <property type="molecule type" value="mRNA"/>
</dbReference>
<dbReference type="EMBL" id="AK292584">
    <property type="protein sequence ID" value="BAF85273.1"/>
    <property type="molecule type" value="mRNA"/>
</dbReference>
<dbReference type="EMBL" id="AL049697">
    <property type="status" value="NOT_ANNOTATED_CDS"/>
    <property type="molecule type" value="Genomic_DNA"/>
</dbReference>
<dbReference type="EMBL" id="CH471051">
    <property type="protein sequence ID" value="EAW48594.1"/>
    <property type="molecule type" value="Genomic_DNA"/>
</dbReference>
<dbReference type="EMBL" id="CH471051">
    <property type="protein sequence ID" value="EAW48596.1"/>
    <property type="molecule type" value="Genomic_DNA"/>
</dbReference>
<dbReference type="EMBL" id="CH471051">
    <property type="protein sequence ID" value="EAW48598.1"/>
    <property type="molecule type" value="Genomic_DNA"/>
</dbReference>
<dbReference type="EMBL" id="BC035083">
    <property type="protein sequence ID" value="AAH35083.2"/>
    <property type="molecule type" value="mRNA"/>
</dbReference>
<dbReference type="CCDS" id="CCDS34498.1"/>
<dbReference type="RefSeq" id="NP_001026913.1">
    <property type="nucleotide sequence ID" value="NM_001031743.3"/>
</dbReference>
<dbReference type="BioGRID" id="127543">
    <property type="interactions" value="66"/>
</dbReference>
<dbReference type="ComplexPortal" id="CPX-8163">
    <property type="entry name" value="Radial spoke complex, ciliiar variant"/>
</dbReference>
<dbReference type="ComplexPortal" id="CPX-8164">
    <property type="entry name" value="Radial spoke complex, flagellar variant"/>
</dbReference>
<dbReference type="FunCoup" id="Q8IYR0">
    <property type="interactions" value="101"/>
</dbReference>
<dbReference type="IntAct" id="Q8IYR0">
    <property type="interactions" value="59"/>
</dbReference>
<dbReference type="MINT" id="Q8IYR0"/>
<dbReference type="STRING" id="9606.ENSP00000358575"/>
<dbReference type="GlyGen" id="Q8IYR0">
    <property type="glycosylation" value="1 site, 1 O-linked glycan (1 site)"/>
</dbReference>
<dbReference type="iPTMnet" id="Q8IYR0"/>
<dbReference type="PhosphoSitePlus" id="Q8IYR0"/>
<dbReference type="BioMuta" id="CFAP206"/>
<dbReference type="DMDM" id="34395551"/>
<dbReference type="jPOST" id="Q8IYR0"/>
<dbReference type="MassIVE" id="Q8IYR0"/>
<dbReference type="PaxDb" id="9606-ENSP00000358575"/>
<dbReference type="PeptideAtlas" id="Q8IYR0"/>
<dbReference type="ProteomicsDB" id="71214"/>
<dbReference type="Antibodypedia" id="73997">
    <property type="antibodies" value="44 antibodies from 8 providers"/>
</dbReference>
<dbReference type="DNASU" id="154313"/>
<dbReference type="Ensembl" id="ENST00000369562.9">
    <property type="protein sequence ID" value="ENSP00000358575.4"/>
    <property type="gene ID" value="ENSG00000272514.6"/>
</dbReference>
<dbReference type="GeneID" id="154313"/>
<dbReference type="KEGG" id="hsa:154313"/>
<dbReference type="MANE-Select" id="ENST00000369562.9">
    <property type="protein sequence ID" value="ENSP00000358575.4"/>
    <property type="RefSeq nucleotide sequence ID" value="NM_001031743.3"/>
    <property type="RefSeq protein sequence ID" value="NP_001026913.1"/>
</dbReference>
<dbReference type="UCSC" id="uc003plv.4">
    <property type="organism name" value="human"/>
</dbReference>
<dbReference type="AGR" id="HGNC:21405"/>
<dbReference type="CTD" id="154313"/>
<dbReference type="DisGeNET" id="154313"/>
<dbReference type="GeneCards" id="CFAP206"/>
<dbReference type="HGNC" id="HGNC:21405">
    <property type="gene designation" value="CFAP206"/>
</dbReference>
<dbReference type="HPA" id="ENSG00000272514">
    <property type="expression patterns" value="Group enriched (fallopian tube, testis)"/>
</dbReference>
<dbReference type="neXtProt" id="NX_Q8IYR0"/>
<dbReference type="OpenTargets" id="ENSG00000213204"/>
<dbReference type="OpenTargets" id="ENSG00000272514"/>
<dbReference type="PharmGKB" id="PA134983540"/>
<dbReference type="VEuPathDB" id="HostDB:ENSG00000272514"/>
<dbReference type="eggNOG" id="ENOG502QTGJ">
    <property type="taxonomic scope" value="Eukaryota"/>
</dbReference>
<dbReference type="GeneTree" id="ENSGT00390000016036"/>
<dbReference type="HOGENOM" id="CLU_030061_0_0_1"/>
<dbReference type="InParanoid" id="Q8IYR0"/>
<dbReference type="OMA" id="QLMELMC"/>
<dbReference type="OrthoDB" id="10251073at2759"/>
<dbReference type="PAN-GO" id="Q8IYR0">
    <property type="GO annotations" value="5 GO annotations based on evolutionary models"/>
</dbReference>
<dbReference type="PhylomeDB" id="Q8IYR0"/>
<dbReference type="TreeFam" id="TF323439"/>
<dbReference type="PathwayCommons" id="Q8IYR0"/>
<dbReference type="SignaLink" id="Q8IYR0"/>
<dbReference type="BioGRID-ORCS" id="154313">
    <property type="hits" value="10 hits in 1107 CRISPR screens"/>
</dbReference>
<dbReference type="ChiTaRS" id="CFAP206">
    <property type="organism name" value="human"/>
</dbReference>
<dbReference type="GenomeRNAi" id="154313"/>
<dbReference type="Pharos" id="Q8IYR0">
    <property type="development level" value="Tdark"/>
</dbReference>
<dbReference type="PRO" id="PR:Q8IYR0"/>
<dbReference type="Proteomes" id="UP000005640">
    <property type="component" value="Chromosome 6"/>
</dbReference>
<dbReference type="RNAct" id="Q8IYR0">
    <property type="molecule type" value="protein"/>
</dbReference>
<dbReference type="Bgee" id="ENSG00000272514">
    <property type="expression patterns" value="Expressed in right uterine tube and 75 other cell types or tissues"/>
</dbReference>
<dbReference type="ExpressionAtlas" id="Q8IYR0">
    <property type="expression patterns" value="baseline and differential"/>
</dbReference>
<dbReference type="GO" id="GO:0005930">
    <property type="term" value="C:axoneme"/>
    <property type="evidence" value="ECO:0000250"/>
    <property type="project" value="UniProtKB"/>
</dbReference>
<dbReference type="GO" id="GO:0036064">
    <property type="term" value="C:ciliary basal body"/>
    <property type="evidence" value="ECO:0000250"/>
    <property type="project" value="UniProtKB"/>
</dbReference>
<dbReference type="GO" id="GO:0031514">
    <property type="term" value="C:motile cilium"/>
    <property type="evidence" value="ECO:0000250"/>
    <property type="project" value="UniProtKB"/>
</dbReference>
<dbReference type="GO" id="GO:0001534">
    <property type="term" value="C:radial spoke"/>
    <property type="evidence" value="ECO:0000250"/>
    <property type="project" value="UniProtKB"/>
</dbReference>
<dbReference type="GO" id="GO:0035082">
    <property type="term" value="P:axoneme assembly"/>
    <property type="evidence" value="ECO:0000250"/>
    <property type="project" value="UniProtKB"/>
</dbReference>
<dbReference type="GO" id="GO:0003341">
    <property type="term" value="P:cilium movement"/>
    <property type="evidence" value="ECO:0000250"/>
    <property type="project" value="UniProtKB"/>
</dbReference>
<dbReference type="GO" id="GO:0003356">
    <property type="term" value="P:regulation of cilium beat frequency"/>
    <property type="evidence" value="ECO:0000250"/>
    <property type="project" value="UniProtKB"/>
</dbReference>
<dbReference type="GO" id="GO:1901317">
    <property type="term" value="P:regulation of flagellated sperm motility"/>
    <property type="evidence" value="ECO:0000250"/>
    <property type="project" value="UniProtKB"/>
</dbReference>
<dbReference type="GO" id="GO:0007288">
    <property type="term" value="P:sperm axoneme assembly"/>
    <property type="evidence" value="ECO:0000250"/>
    <property type="project" value="UniProtKB"/>
</dbReference>
<dbReference type="InterPro" id="IPR021897">
    <property type="entry name" value="FAP206"/>
</dbReference>
<dbReference type="PANTHER" id="PTHR21442">
    <property type="entry name" value="CILIA- AND FLAGELLA-ASSOCIATED PROTEIN 206"/>
    <property type="match status" value="1"/>
</dbReference>
<dbReference type="PANTHER" id="PTHR21442:SF0">
    <property type="entry name" value="CILIA- AND FLAGELLA-ASSOCIATED PROTEIN 206"/>
    <property type="match status" value="1"/>
</dbReference>
<dbReference type="Pfam" id="PF12018">
    <property type="entry name" value="FAP206"/>
    <property type="match status" value="1"/>
</dbReference>
<sequence>MPPTQAESVIRSIIREIGQECAAHGEIVSETLIAFMVKAVVLDPSNGFNMDRTLMKSDVQNLVKLCMTRLLDTKNPSLDTIKMQVYFDMNYTNRVEFLEEHHRVLESRLGSVTREITDNRACAKEELESLYRKIISYVLLRSGLGSPTDIKTVREVTAALQSVFPQAELGTFLTLSKKDKERQLKELTMIVTGIRLFNRDCGKGGEGIDDLPAVLHVAIPATMQHIDYQLETARSQVYRYTAILEKAANDPLMRAELQPYMLKEALYNIRQYEVFLQIILSDIITGAQEVEMMTKQLGAHLEQLKMTIKSKIAVPTSQVFPIFIALSTLWTSLQDETIVVGVLSNLFTHIQPFLGAHELYFPERVMQCHLNGATVKTDVCRMKEHMEDRVNVADFRKLEWLFPETTANFDKLLIQYRGFCAYTFAATDGLLLPGNPAIGILKYKEKYYTFNSKDAAYSFAENPEHYIDIVREKAKKNTELIQLLELHQQFETFIPYSQMRDADKHYIKPITKCESSTQTNTHILPPTIVRSYEWNEWELRRKAIKLANLRQKVTHSVQTDLSHLRRENCSQVYPPKDTSTQSMREDSTGVPRPQIYLAGLRGGKSEITDEVKVNLTRDVDET</sequence>
<feature type="chain" id="PRO_0000089553" description="Cilia- and flagella-associated protein 206">
    <location>
        <begin position="1"/>
        <end position="622"/>
    </location>
</feature>
<feature type="region of interest" description="Disordered" evidence="2">
    <location>
        <begin position="570"/>
        <end position="592"/>
    </location>
</feature>
<feature type="sequence variant" id="VAR_033679" description="In dbSNP:rs13219364.">
    <original>R</original>
    <variation>K</variation>
    <location>
        <position position="154"/>
    </location>
</feature>
<feature type="sequence variant" id="VAR_033680" description="In dbSNP:rs16879281.">
    <original>G</original>
    <variation>A</variation>
    <location>
        <position position="170"/>
    </location>
</feature>
<feature type="sequence conflict" description="In Ref. 1; BAF85273." evidence="3" ref="1">
    <original>Q</original>
    <variation>R</variation>
    <location>
        <position position="489"/>
    </location>
</feature>
<gene>
    <name evidence="4" type="primary">CFAP206</name>
    <name evidence="4" type="synonym">C6orf165</name>
</gene>
<comment type="function">
    <text evidence="1">Essential for sperm motility and is involved in the regulation of the beating frequency of motile cilia on the epithelial cells of the respiratory tract (By similarity). Required for the establishment of radial spokes in sperm flagella (By similarity).</text>
</comment>
<comment type="interaction">
    <interactant intactId="EBI-749051">
        <id>Q8IYR0</id>
    </interactant>
    <interactant intactId="EBI-10173507">
        <id>Q6UY14-3</id>
        <label>ADAMTSL4</label>
    </interactant>
    <organismsDiffer>false</organismsDiffer>
    <experiments>6</experiments>
</comment>
<comment type="interaction">
    <interactant intactId="EBI-749051">
        <id>Q8IYR0</id>
    </interactant>
    <interactant intactId="EBI-14493093">
        <id>Q3KP44</id>
        <label>ANKRD55</label>
    </interactant>
    <organismsDiffer>false</organismsDiffer>
    <experiments>3</experiments>
</comment>
<comment type="interaction">
    <interactant intactId="EBI-749051">
        <id>Q8IYR0</id>
    </interactant>
    <interactant intactId="EBI-359248">
        <id>Q96GX9</id>
        <label>APIP</label>
    </interactant>
    <organismsDiffer>false</organismsDiffer>
    <experiments>3</experiments>
</comment>
<comment type="interaction">
    <interactant intactId="EBI-749051">
        <id>Q8IYR0</id>
    </interactant>
    <interactant intactId="EBI-1166928">
        <id>Q8N5M1</id>
        <label>ATPAF2</label>
    </interactant>
    <organismsDiffer>false</organismsDiffer>
    <experiments>3</experiments>
</comment>
<comment type="interaction">
    <interactant intactId="EBI-749051">
        <id>Q8IYR0</id>
    </interactant>
    <interactant intactId="EBI-744695">
        <id>Q8N9N5</id>
        <label>BANP</label>
    </interactant>
    <organismsDiffer>false</organismsDiffer>
    <experiments>3</experiments>
</comment>
<comment type="interaction">
    <interactant intactId="EBI-749051">
        <id>Q8IYR0</id>
    </interactant>
    <interactant intactId="EBI-11524452">
        <id>Q8N9N5-2</id>
        <label>BANP</label>
    </interactant>
    <organismsDiffer>false</organismsDiffer>
    <experiments>3</experiments>
</comment>
<comment type="interaction">
    <interactant intactId="EBI-749051">
        <id>Q8IYR0</id>
    </interactant>
    <interactant intactId="EBI-2548012">
        <id>Q9H2G9</id>
        <label>BLZF1</label>
    </interactant>
    <organismsDiffer>false</organismsDiffer>
    <experiments>3</experiments>
</comment>
<comment type="interaction">
    <interactant intactId="EBI-749051">
        <id>Q8IYR0</id>
    </interactant>
    <interactant intactId="EBI-946029">
        <id>Q6P1W5</id>
        <label>C1orf94</label>
    </interactant>
    <organismsDiffer>false</organismsDiffer>
    <experiments>4</experiments>
</comment>
<comment type="interaction">
    <interactant intactId="EBI-749051">
        <id>Q8IYR0</id>
    </interactant>
    <interactant intactId="EBI-12159293">
        <id>Q5TBE3-2</id>
        <label>C9orf153</label>
    </interactant>
    <organismsDiffer>false</organismsDiffer>
    <experiments>3</experiments>
</comment>
<comment type="interaction">
    <interactant intactId="EBI-749051">
        <id>Q8IYR0</id>
    </interactant>
    <interactant intactId="EBI-10899513">
        <id>Q99626</id>
        <label>CDX2</label>
    </interactant>
    <organismsDiffer>false</organismsDiffer>
    <experiments>3</experiments>
</comment>
<comment type="interaction">
    <interactant intactId="EBI-749051">
        <id>Q8IYR0</id>
    </interactant>
    <interactant intactId="EBI-10181988">
        <id>Q8IYX8-2</id>
        <label>CEP57L1</label>
    </interactant>
    <organismsDiffer>false</organismsDiffer>
    <experiments>3</experiments>
</comment>
<comment type="interaction">
    <interactant intactId="EBI-749051">
        <id>Q8IYR0</id>
    </interactant>
    <interactant intactId="EBI-9038570">
        <id>P27918</id>
        <label>CFP</label>
    </interactant>
    <organismsDiffer>false</organismsDiffer>
    <experiments>3</experiments>
</comment>
<comment type="interaction">
    <interactant intactId="EBI-749051">
        <id>Q8IYR0</id>
    </interactant>
    <interactant intactId="EBI-11523759">
        <id>Q8N684-3</id>
        <label>CPSF7</label>
    </interactant>
    <organismsDiffer>false</organismsDiffer>
    <experiments>3</experiments>
</comment>
<comment type="interaction">
    <interactant intactId="EBI-749051">
        <id>Q8IYR0</id>
    </interactant>
    <interactant intactId="EBI-748171">
        <id>O43186</id>
        <label>CRX</label>
    </interactant>
    <organismsDiffer>false</organismsDiffer>
    <experiments>3</experiments>
</comment>
<comment type="interaction">
    <interactant intactId="EBI-749051">
        <id>Q8IYR0</id>
    </interactant>
    <interactant intactId="EBI-3867333">
        <id>A8MQ03</id>
        <label>CYSRT1</label>
    </interactant>
    <organismsDiffer>false</organismsDiffer>
    <experiments>3</experiments>
</comment>
<comment type="interaction">
    <interactant intactId="EBI-749051">
        <id>Q8IYR0</id>
    </interactant>
    <interactant intactId="EBI-11988027">
        <id>Q9NRI5-2</id>
        <label>DISC1</label>
    </interactant>
    <organismsDiffer>false</organismsDiffer>
    <experiments>3</experiments>
</comment>
<comment type="interaction">
    <interactant intactId="EBI-749051">
        <id>Q8IYR0</id>
    </interactant>
    <interactant intactId="EBI-301024">
        <id>Q9NRA8</id>
        <label>EIF4ENIF1</label>
    </interactant>
    <organismsDiffer>false</organismsDiffer>
    <experiments>3</experiments>
</comment>
<comment type="interaction">
    <interactant intactId="EBI-749051">
        <id>Q8IYR0</id>
    </interactant>
    <interactant intactId="EBI-744302">
        <id>P14136</id>
        <label>GFAP</label>
    </interactant>
    <organismsDiffer>false</organismsDiffer>
    <experiments>3</experiments>
</comment>
<comment type="interaction">
    <interactant intactId="EBI-749051">
        <id>Q8IYR0</id>
    </interactant>
    <interactant intactId="EBI-2804292">
        <id>Q49A26</id>
        <label>GLYR1</label>
    </interactant>
    <organismsDiffer>false</organismsDiffer>
    <experiments>3</experiments>
</comment>
<comment type="interaction">
    <interactant intactId="EBI-749051">
        <id>Q8IYR0</id>
    </interactant>
    <interactant intactId="EBI-473189">
        <id>Q96D09</id>
        <label>GPRASP2</label>
    </interactant>
    <organismsDiffer>false</organismsDiffer>
    <experiments>6</experiments>
</comment>
<comment type="interaction">
    <interactant intactId="EBI-749051">
        <id>Q8IYR0</id>
    </interactant>
    <interactant intactId="EBI-372619">
        <id>Q14687</id>
        <label>GSE1</label>
    </interactant>
    <organismsDiffer>false</organismsDiffer>
    <experiments>3</experiments>
</comment>
<comment type="interaction">
    <interactant intactId="EBI-749051">
        <id>Q8IYR0</id>
    </interactant>
    <interactant intactId="EBI-8638439">
        <id>Q8IYA8</id>
        <label>IHO1</label>
    </interactant>
    <organismsDiffer>false</organismsDiffer>
    <experiments>3</experiments>
</comment>
<comment type="interaction">
    <interactant intactId="EBI-749051">
        <id>Q8IYR0</id>
    </interactant>
    <interactant intactId="EBI-747204">
        <id>Q9UKT9</id>
        <label>IKZF3</label>
    </interactant>
    <organismsDiffer>false</organismsDiffer>
    <experiments>3</experiments>
</comment>
<comment type="interaction">
    <interactant intactId="EBI-749051">
        <id>Q8IYR0</id>
    </interactant>
    <interactant intactId="EBI-3437878">
        <id>Q86T90</id>
        <label>KIAA1328</label>
    </interactant>
    <organismsDiffer>false</organismsDiffer>
    <experiments>3</experiments>
</comment>
<comment type="interaction">
    <interactant intactId="EBI-749051">
        <id>Q8IYR0</id>
    </interactant>
    <interactant intactId="EBI-10230467">
        <id>Q8N4I8</id>
        <label>KLHL3</label>
    </interactant>
    <organismsDiffer>false</organismsDiffer>
    <experiments>3</experiments>
</comment>
<comment type="interaction">
    <interactant intactId="EBI-749051">
        <id>Q8IYR0</id>
    </interactant>
    <interactant intactId="EBI-948001">
        <id>Q15323</id>
        <label>KRT31</label>
    </interactant>
    <organismsDiffer>false</organismsDiffer>
    <experiments>3</experiments>
</comment>
<comment type="interaction">
    <interactant intactId="EBI-749051">
        <id>Q8IYR0</id>
    </interactant>
    <interactant intactId="EBI-1047093">
        <id>O76011</id>
        <label>KRT34</label>
    </interactant>
    <organismsDiffer>false</organismsDiffer>
    <experiments>3</experiments>
</comment>
<comment type="interaction">
    <interactant intactId="EBI-749051">
        <id>Q8IYR0</id>
    </interactant>
    <interactant intactId="EBI-10171697">
        <id>Q6A162</id>
        <label>KRT40</label>
    </interactant>
    <organismsDiffer>false</organismsDiffer>
    <experiments>6</experiments>
</comment>
<comment type="interaction">
    <interactant intactId="EBI-749051">
        <id>Q8IYR0</id>
    </interactant>
    <interactant intactId="EBI-2949715">
        <id>O95678</id>
        <label>KRT75</label>
    </interactant>
    <organismsDiffer>false</organismsDiffer>
    <experiments>3</experiments>
</comment>
<comment type="interaction">
    <interactant intactId="EBI-749051">
        <id>Q8IYR0</id>
    </interactant>
    <interactant intactId="EBI-2952745">
        <id>Q01546</id>
        <label>KRT76</label>
    </interactant>
    <organismsDiffer>false</organismsDiffer>
    <experiments>3</experiments>
</comment>
<comment type="interaction">
    <interactant intactId="EBI-749051">
        <id>Q8IYR0</id>
    </interactant>
    <interactant intactId="EBI-3957672">
        <id>Q6PEX3</id>
        <label>KRTAP26-1</label>
    </interactant>
    <organismsDiffer>false</organismsDiffer>
    <experiments>3</experiments>
</comment>
<comment type="interaction">
    <interactant intactId="EBI-749051">
        <id>Q8IYR0</id>
    </interactant>
    <interactant intactId="EBI-741037">
        <id>Q9BRK4</id>
        <label>LZTS2</label>
    </interactant>
    <organismsDiffer>false</organismsDiffer>
    <experiments>3</experiments>
</comment>
<comment type="interaction">
    <interactant intactId="EBI-749051">
        <id>Q8IYR0</id>
    </interactant>
    <interactant intactId="EBI-716006">
        <id>Q9Y5V3</id>
        <label>MAGED1</label>
    </interactant>
    <organismsDiffer>false</organismsDiffer>
    <experiments>3</experiments>
</comment>
<comment type="interaction">
    <interactant intactId="EBI-749051">
        <id>Q8IYR0</id>
    </interactant>
    <interactant intactId="EBI-16439278">
        <id>Q6FHY5</id>
        <label>MEOX2</label>
    </interactant>
    <organismsDiffer>false</organismsDiffer>
    <experiments>3</experiments>
</comment>
<comment type="interaction">
    <interactant intactId="EBI-749051">
        <id>Q8IYR0</id>
    </interactant>
    <interactant intactId="EBI-9118295">
        <id>A9UHW6-2</id>
        <label>MIF4GD</label>
    </interactant>
    <organismsDiffer>false</organismsDiffer>
    <experiments>3</experiments>
</comment>
<comment type="interaction">
    <interactant intactId="EBI-749051">
        <id>Q8IYR0</id>
    </interactant>
    <interactant intactId="EBI-744871">
        <id>O00746</id>
        <label>NME4</label>
    </interactant>
    <organismsDiffer>false</organismsDiffer>
    <experiments>3</experiments>
</comment>
<comment type="interaction">
    <interactant intactId="EBI-749051">
        <id>Q8IYR0</id>
    </interactant>
    <interactant intactId="EBI-10232538">
        <id>Q8WWB5</id>
        <label>PIH1D2</label>
    </interactant>
    <organismsDiffer>false</organismsDiffer>
    <experiments>3</experiments>
</comment>
<comment type="interaction">
    <interactant intactId="EBI-749051">
        <id>Q8IYR0</id>
    </interactant>
    <interactant intactId="EBI-359352">
        <id>P25786</id>
        <label>PSMA1</label>
    </interactant>
    <organismsDiffer>false</organismsDiffer>
    <experiments>3</experiments>
</comment>
<comment type="interaction">
    <interactant intactId="EBI-749051">
        <id>Q8IYR0</id>
    </interactant>
    <interactant intactId="EBI-357745">
        <id>P62195</id>
        <label>PSMC5</label>
    </interactant>
    <organismsDiffer>false</organismsDiffer>
    <experiments>3</experiments>
</comment>
<comment type="interaction">
    <interactant intactId="EBI-749051">
        <id>Q8IYR0</id>
    </interactant>
    <interactant intactId="EBI-10829018">
        <id>Q04864-2</id>
        <label>REL</label>
    </interactant>
    <organismsDiffer>false</organismsDiffer>
    <experiments>3</experiments>
</comment>
<comment type="interaction">
    <interactant intactId="EBI-749051">
        <id>Q8IYR0</id>
    </interactant>
    <interactant intactId="EBI-876651">
        <id>Q13464</id>
        <label>ROCK1</label>
    </interactant>
    <organismsDiffer>false</organismsDiffer>
    <experiments>3</experiments>
</comment>
<comment type="interaction">
    <interactant intactId="EBI-749051">
        <id>Q8IYR0</id>
    </interactant>
    <interactant intactId="EBI-748741">
        <id>Q8N6K7</id>
        <label>SAMD3</label>
    </interactant>
    <organismsDiffer>false</organismsDiffer>
    <experiments>3</experiments>
</comment>
<comment type="interaction">
    <interactant intactId="EBI-749051">
        <id>Q8IYR0</id>
    </interactant>
    <interactant intactId="EBI-3957636">
        <id>Q8IYX7</id>
        <label>SAXO1</label>
    </interactant>
    <organismsDiffer>false</organismsDiffer>
    <experiments>3</experiments>
</comment>
<comment type="interaction">
    <interactant intactId="EBI-749051">
        <id>Q8IYR0</id>
    </interactant>
    <interactant intactId="EBI-741237">
        <id>O60504</id>
        <label>SORBS3</label>
    </interactant>
    <organismsDiffer>false</organismsDiffer>
    <experiments>3</experiments>
</comment>
<comment type="interaction">
    <interactant intactId="EBI-749051">
        <id>Q8IYR0</id>
    </interactant>
    <interactant intactId="EBI-742973">
        <id>O94993</id>
        <label>SOX30</label>
    </interactant>
    <organismsDiffer>false</organismsDiffer>
    <experiments>4</experiments>
</comment>
<comment type="interaction">
    <interactant intactId="EBI-749051">
        <id>Q8IYR0</id>
    </interactant>
    <interactant intactId="EBI-18173581">
        <id>Q86TJ2-3</id>
        <label>TADA2B</label>
    </interactant>
    <organismsDiffer>false</organismsDiffer>
    <experiments>3</experiments>
</comment>
<comment type="interaction">
    <interactant intactId="EBI-749051">
        <id>Q8IYR0</id>
    </interactant>
    <interactant intactId="EBI-745958">
        <id>Q5VWN6</id>
        <label>TASOR2</label>
    </interactant>
    <organismsDiffer>false</organismsDiffer>
    <experiments>3</experiments>
</comment>
<comment type="interaction">
    <interactant intactId="EBI-749051">
        <id>Q8IYR0</id>
    </interactant>
    <interactant intactId="EBI-722877">
        <id>Q99081</id>
        <label>TCF12</label>
    </interactant>
    <organismsDiffer>false</organismsDiffer>
    <experiments>3</experiments>
</comment>
<comment type="interaction">
    <interactant intactId="EBI-749051">
        <id>Q8IYR0</id>
    </interactant>
    <interactant intactId="EBI-10180409">
        <id>Q969V4</id>
        <label>TEKT1</label>
    </interactant>
    <organismsDiffer>false</organismsDiffer>
    <experiments>3</experiments>
</comment>
<comment type="interaction">
    <interactant intactId="EBI-749051">
        <id>Q8IYR0</id>
    </interactant>
    <interactant intactId="EBI-1105213">
        <id>Q9UBB9</id>
        <label>TFIP11</label>
    </interactant>
    <organismsDiffer>false</organismsDiffer>
    <experiments>4</experiments>
</comment>
<comment type="interaction">
    <interactant intactId="EBI-749051">
        <id>Q8IYR0</id>
    </interactant>
    <interactant intactId="EBI-717810">
        <id>Q08117</id>
        <label>TLE5</label>
    </interactant>
    <organismsDiffer>false</organismsDiffer>
    <experiments>3</experiments>
</comment>
<comment type="interaction">
    <interactant intactId="EBI-749051">
        <id>Q8IYR0</id>
    </interactant>
    <interactant intactId="EBI-719493">
        <id>P14373</id>
        <label>TRIM27</label>
    </interactant>
    <organismsDiffer>false</organismsDiffer>
    <experiments>3</experiments>
</comment>
<comment type="interaction">
    <interactant intactId="EBI-749051">
        <id>Q8IYR0</id>
    </interactant>
    <interactant intactId="EBI-2130429">
        <id>Q9BYV2</id>
        <label>TRIM54</label>
    </interactant>
    <organismsDiffer>false</organismsDiffer>
    <experiments>3</experiments>
</comment>
<comment type="interaction">
    <interactant intactId="EBI-749051">
        <id>Q8IYR0</id>
    </interactant>
    <interactant intactId="EBI-746004">
        <id>Q5T124</id>
        <label>UBXN11</label>
    </interactant>
    <organismsDiffer>false</organismsDiffer>
    <experiments>4</experiments>
</comment>
<comment type="interaction">
    <interactant intactId="EBI-749051">
        <id>Q8IYR0</id>
    </interactant>
    <interactant intactId="EBI-11524408">
        <id>Q5T124-6</id>
        <label>UBXN11</label>
    </interactant>
    <organismsDiffer>false</organismsDiffer>
    <experiments>3</experiments>
</comment>
<comment type="interaction">
    <interactant intactId="EBI-749051">
        <id>Q8IYR0</id>
    </interactant>
    <interactant intactId="EBI-739895">
        <id>Q8N6Y0</id>
        <label>USHBP1</label>
    </interactant>
    <organismsDiffer>false</organismsDiffer>
    <experiments>3</experiments>
</comment>
<comment type="interaction">
    <interactant intactId="EBI-749051">
        <id>Q8IYR0</id>
    </interactant>
    <interactant intactId="EBI-2799833">
        <id>Q8N1B4</id>
        <label>VPS52</label>
    </interactant>
    <organismsDiffer>false</organismsDiffer>
    <experiments>3</experiments>
</comment>
<comment type="interaction">
    <interactant intactId="EBI-749051">
        <id>Q8IYR0</id>
    </interactant>
    <interactant intactId="EBI-10269136">
        <id>Q8NB15</id>
        <label>ZNF511</label>
    </interactant>
    <organismsDiffer>false</organismsDiffer>
    <experiments>3</experiments>
</comment>
<comment type="subcellular location">
    <subcellularLocation>
        <location evidence="1">Cytoplasm</location>
        <location evidence="1">Cytoskeleton</location>
        <location evidence="1">Cilium axoneme</location>
    </subcellularLocation>
    <subcellularLocation>
        <location evidence="1">Cytoplasm</location>
        <location evidence="1">Cytoskeleton</location>
        <location evidence="1">Cilium basal body</location>
    </subcellularLocation>
</comment>
<comment type="similarity">
    <text evidence="3">Belongs to the CFAP206 family.</text>
</comment>
<comment type="sequence caution" evidence="3">
    <conflict type="miscellaneous discrepancy">
        <sequence resource="EMBL-CDS" id="BAC04234"/>
    </conflict>
    <text>Intron retention.</text>
</comment>
<organism>
    <name type="scientific">Homo sapiens</name>
    <name type="common">Human</name>
    <dbReference type="NCBI Taxonomy" id="9606"/>
    <lineage>
        <taxon>Eukaryota</taxon>
        <taxon>Metazoa</taxon>
        <taxon>Chordata</taxon>
        <taxon>Craniata</taxon>
        <taxon>Vertebrata</taxon>
        <taxon>Euteleostomi</taxon>
        <taxon>Mammalia</taxon>
        <taxon>Eutheria</taxon>
        <taxon>Euarchontoglires</taxon>
        <taxon>Primates</taxon>
        <taxon>Haplorrhini</taxon>
        <taxon>Catarrhini</taxon>
        <taxon>Hominidae</taxon>
        <taxon>Homo</taxon>
    </lineage>
</organism>
<name>CF206_HUMAN</name>
<reference key="1">
    <citation type="journal article" date="2004" name="Nat. Genet.">
        <title>Complete sequencing and characterization of 21,243 full-length human cDNAs.</title>
        <authorList>
            <person name="Ota T."/>
            <person name="Suzuki Y."/>
            <person name="Nishikawa T."/>
            <person name="Otsuki T."/>
            <person name="Sugiyama T."/>
            <person name="Irie R."/>
            <person name="Wakamatsu A."/>
            <person name="Hayashi K."/>
            <person name="Sato H."/>
            <person name="Nagai K."/>
            <person name="Kimura K."/>
            <person name="Makita H."/>
            <person name="Sekine M."/>
            <person name="Obayashi M."/>
            <person name="Nishi T."/>
            <person name="Shibahara T."/>
            <person name="Tanaka T."/>
            <person name="Ishii S."/>
            <person name="Yamamoto J."/>
            <person name="Saito K."/>
            <person name="Kawai Y."/>
            <person name="Isono Y."/>
            <person name="Nakamura Y."/>
            <person name="Nagahari K."/>
            <person name="Murakami K."/>
            <person name="Yasuda T."/>
            <person name="Iwayanagi T."/>
            <person name="Wagatsuma M."/>
            <person name="Shiratori A."/>
            <person name="Sudo H."/>
            <person name="Hosoiri T."/>
            <person name="Kaku Y."/>
            <person name="Kodaira H."/>
            <person name="Kondo H."/>
            <person name="Sugawara M."/>
            <person name="Takahashi M."/>
            <person name="Kanda K."/>
            <person name="Yokoi T."/>
            <person name="Furuya T."/>
            <person name="Kikkawa E."/>
            <person name="Omura Y."/>
            <person name="Abe K."/>
            <person name="Kamihara K."/>
            <person name="Katsuta N."/>
            <person name="Sato K."/>
            <person name="Tanikawa M."/>
            <person name="Yamazaki M."/>
            <person name="Ninomiya K."/>
            <person name="Ishibashi T."/>
            <person name="Yamashita H."/>
            <person name="Murakawa K."/>
            <person name="Fujimori K."/>
            <person name="Tanai H."/>
            <person name="Kimata M."/>
            <person name="Watanabe M."/>
            <person name="Hiraoka S."/>
            <person name="Chiba Y."/>
            <person name="Ishida S."/>
            <person name="Ono Y."/>
            <person name="Takiguchi S."/>
            <person name="Watanabe S."/>
            <person name="Yosida M."/>
            <person name="Hotuta T."/>
            <person name="Kusano J."/>
            <person name="Kanehori K."/>
            <person name="Takahashi-Fujii A."/>
            <person name="Hara H."/>
            <person name="Tanase T.-O."/>
            <person name="Nomura Y."/>
            <person name="Togiya S."/>
            <person name="Komai F."/>
            <person name="Hara R."/>
            <person name="Takeuchi K."/>
            <person name="Arita M."/>
            <person name="Imose N."/>
            <person name="Musashino K."/>
            <person name="Yuuki H."/>
            <person name="Oshima A."/>
            <person name="Sasaki N."/>
            <person name="Aotsuka S."/>
            <person name="Yoshikawa Y."/>
            <person name="Matsunawa H."/>
            <person name="Ichihara T."/>
            <person name="Shiohata N."/>
            <person name="Sano S."/>
            <person name="Moriya S."/>
            <person name="Momiyama H."/>
            <person name="Satoh N."/>
            <person name="Takami S."/>
            <person name="Terashima Y."/>
            <person name="Suzuki O."/>
            <person name="Nakagawa S."/>
            <person name="Senoh A."/>
            <person name="Mizoguchi H."/>
            <person name="Goto Y."/>
            <person name="Shimizu F."/>
            <person name="Wakebe H."/>
            <person name="Hishigaki H."/>
            <person name="Watanabe T."/>
            <person name="Sugiyama A."/>
            <person name="Takemoto M."/>
            <person name="Kawakami B."/>
            <person name="Yamazaki M."/>
            <person name="Watanabe K."/>
            <person name="Kumagai A."/>
            <person name="Itakura S."/>
            <person name="Fukuzumi Y."/>
            <person name="Fujimori Y."/>
            <person name="Komiyama M."/>
            <person name="Tashiro H."/>
            <person name="Tanigami A."/>
            <person name="Fujiwara T."/>
            <person name="Ono T."/>
            <person name="Yamada K."/>
            <person name="Fujii Y."/>
            <person name="Ozaki K."/>
            <person name="Hirao M."/>
            <person name="Ohmori Y."/>
            <person name="Kawabata A."/>
            <person name="Hikiji T."/>
            <person name="Kobatake N."/>
            <person name="Inagaki H."/>
            <person name="Ikema Y."/>
            <person name="Okamoto S."/>
            <person name="Okitani R."/>
            <person name="Kawakami T."/>
            <person name="Noguchi S."/>
            <person name="Itoh T."/>
            <person name="Shigeta K."/>
            <person name="Senba T."/>
            <person name="Matsumura K."/>
            <person name="Nakajima Y."/>
            <person name="Mizuno T."/>
            <person name="Morinaga M."/>
            <person name="Sasaki M."/>
            <person name="Togashi T."/>
            <person name="Oyama M."/>
            <person name="Hata H."/>
            <person name="Watanabe M."/>
            <person name="Komatsu T."/>
            <person name="Mizushima-Sugano J."/>
            <person name="Satoh T."/>
            <person name="Shirai Y."/>
            <person name="Takahashi Y."/>
            <person name="Nakagawa K."/>
            <person name="Okumura K."/>
            <person name="Nagase T."/>
            <person name="Nomura N."/>
            <person name="Kikuchi H."/>
            <person name="Masuho Y."/>
            <person name="Yamashita R."/>
            <person name="Nakai K."/>
            <person name="Yada T."/>
            <person name="Nakamura Y."/>
            <person name="Ohara O."/>
            <person name="Isogai T."/>
            <person name="Sugano S."/>
        </authorList>
    </citation>
    <scope>NUCLEOTIDE SEQUENCE [LARGE SCALE MRNA]</scope>
    <source>
        <tissue>Testis</tissue>
        <tissue>Trachea</tissue>
    </source>
</reference>
<reference key="2">
    <citation type="journal article" date="2003" name="Nature">
        <title>The DNA sequence and analysis of human chromosome 6.</title>
        <authorList>
            <person name="Mungall A.J."/>
            <person name="Palmer S.A."/>
            <person name="Sims S.K."/>
            <person name="Edwards C.A."/>
            <person name="Ashurst J.L."/>
            <person name="Wilming L."/>
            <person name="Jones M.C."/>
            <person name="Horton R."/>
            <person name="Hunt S.E."/>
            <person name="Scott C.E."/>
            <person name="Gilbert J.G.R."/>
            <person name="Clamp M.E."/>
            <person name="Bethel G."/>
            <person name="Milne S."/>
            <person name="Ainscough R."/>
            <person name="Almeida J.P."/>
            <person name="Ambrose K.D."/>
            <person name="Andrews T.D."/>
            <person name="Ashwell R.I.S."/>
            <person name="Babbage A.K."/>
            <person name="Bagguley C.L."/>
            <person name="Bailey J."/>
            <person name="Banerjee R."/>
            <person name="Barker D.J."/>
            <person name="Barlow K.F."/>
            <person name="Bates K."/>
            <person name="Beare D.M."/>
            <person name="Beasley H."/>
            <person name="Beasley O."/>
            <person name="Bird C.P."/>
            <person name="Blakey S.E."/>
            <person name="Bray-Allen S."/>
            <person name="Brook J."/>
            <person name="Brown A.J."/>
            <person name="Brown J.Y."/>
            <person name="Burford D.C."/>
            <person name="Burrill W."/>
            <person name="Burton J."/>
            <person name="Carder C."/>
            <person name="Carter N.P."/>
            <person name="Chapman J.C."/>
            <person name="Clark S.Y."/>
            <person name="Clark G."/>
            <person name="Clee C.M."/>
            <person name="Clegg S."/>
            <person name="Cobley V."/>
            <person name="Collier R.E."/>
            <person name="Collins J.E."/>
            <person name="Colman L.K."/>
            <person name="Corby N.R."/>
            <person name="Coville G.J."/>
            <person name="Culley K.M."/>
            <person name="Dhami P."/>
            <person name="Davies J."/>
            <person name="Dunn M."/>
            <person name="Earthrowl M.E."/>
            <person name="Ellington A.E."/>
            <person name="Evans K.A."/>
            <person name="Faulkner L."/>
            <person name="Francis M.D."/>
            <person name="Frankish A."/>
            <person name="Frankland J."/>
            <person name="French L."/>
            <person name="Garner P."/>
            <person name="Garnett J."/>
            <person name="Ghori M.J."/>
            <person name="Gilby L.M."/>
            <person name="Gillson C.J."/>
            <person name="Glithero R.J."/>
            <person name="Grafham D.V."/>
            <person name="Grant M."/>
            <person name="Gribble S."/>
            <person name="Griffiths C."/>
            <person name="Griffiths M.N.D."/>
            <person name="Hall R."/>
            <person name="Halls K.S."/>
            <person name="Hammond S."/>
            <person name="Harley J.L."/>
            <person name="Hart E.A."/>
            <person name="Heath P.D."/>
            <person name="Heathcott R."/>
            <person name="Holmes S.J."/>
            <person name="Howden P.J."/>
            <person name="Howe K.L."/>
            <person name="Howell G.R."/>
            <person name="Huckle E."/>
            <person name="Humphray S.J."/>
            <person name="Humphries M.D."/>
            <person name="Hunt A.R."/>
            <person name="Johnson C.M."/>
            <person name="Joy A.A."/>
            <person name="Kay M."/>
            <person name="Keenan S.J."/>
            <person name="Kimberley A.M."/>
            <person name="King A."/>
            <person name="Laird G.K."/>
            <person name="Langford C."/>
            <person name="Lawlor S."/>
            <person name="Leongamornlert D.A."/>
            <person name="Leversha M."/>
            <person name="Lloyd C.R."/>
            <person name="Lloyd D.M."/>
            <person name="Loveland J.E."/>
            <person name="Lovell J."/>
            <person name="Martin S."/>
            <person name="Mashreghi-Mohammadi M."/>
            <person name="Maslen G.L."/>
            <person name="Matthews L."/>
            <person name="McCann O.T."/>
            <person name="McLaren S.J."/>
            <person name="McLay K."/>
            <person name="McMurray A."/>
            <person name="Moore M.J.F."/>
            <person name="Mullikin J.C."/>
            <person name="Niblett D."/>
            <person name="Nickerson T."/>
            <person name="Novik K.L."/>
            <person name="Oliver K."/>
            <person name="Overton-Larty E.K."/>
            <person name="Parker A."/>
            <person name="Patel R."/>
            <person name="Pearce A.V."/>
            <person name="Peck A.I."/>
            <person name="Phillimore B.J.C.T."/>
            <person name="Phillips S."/>
            <person name="Plumb R.W."/>
            <person name="Porter K.M."/>
            <person name="Ramsey Y."/>
            <person name="Ranby S.A."/>
            <person name="Rice C.M."/>
            <person name="Ross M.T."/>
            <person name="Searle S.M."/>
            <person name="Sehra H.K."/>
            <person name="Sheridan E."/>
            <person name="Skuce C.D."/>
            <person name="Smith S."/>
            <person name="Smith M."/>
            <person name="Spraggon L."/>
            <person name="Squares S.L."/>
            <person name="Steward C.A."/>
            <person name="Sycamore N."/>
            <person name="Tamlyn-Hall G."/>
            <person name="Tester J."/>
            <person name="Theaker A.J."/>
            <person name="Thomas D.W."/>
            <person name="Thorpe A."/>
            <person name="Tracey A."/>
            <person name="Tromans A."/>
            <person name="Tubby B."/>
            <person name="Wall M."/>
            <person name="Wallis J.M."/>
            <person name="West A.P."/>
            <person name="White S.S."/>
            <person name="Whitehead S.L."/>
            <person name="Whittaker H."/>
            <person name="Wild A."/>
            <person name="Willey D.J."/>
            <person name="Wilmer T.E."/>
            <person name="Wood J.M."/>
            <person name="Wray P.W."/>
            <person name="Wyatt J.C."/>
            <person name="Young L."/>
            <person name="Younger R.M."/>
            <person name="Bentley D.R."/>
            <person name="Coulson A."/>
            <person name="Durbin R.M."/>
            <person name="Hubbard T."/>
            <person name="Sulston J.E."/>
            <person name="Dunham I."/>
            <person name="Rogers J."/>
            <person name="Beck S."/>
        </authorList>
    </citation>
    <scope>NUCLEOTIDE SEQUENCE [LARGE SCALE GENOMIC DNA]</scope>
</reference>
<reference key="3">
    <citation type="submission" date="2005-09" db="EMBL/GenBank/DDBJ databases">
        <authorList>
            <person name="Mural R.J."/>
            <person name="Istrail S."/>
            <person name="Sutton G.G."/>
            <person name="Florea L."/>
            <person name="Halpern A.L."/>
            <person name="Mobarry C.M."/>
            <person name="Lippert R."/>
            <person name="Walenz B."/>
            <person name="Shatkay H."/>
            <person name="Dew I."/>
            <person name="Miller J.R."/>
            <person name="Flanigan M.J."/>
            <person name="Edwards N.J."/>
            <person name="Bolanos R."/>
            <person name="Fasulo D."/>
            <person name="Halldorsson B.V."/>
            <person name="Hannenhalli S."/>
            <person name="Turner R."/>
            <person name="Yooseph S."/>
            <person name="Lu F."/>
            <person name="Nusskern D.R."/>
            <person name="Shue B.C."/>
            <person name="Zheng X.H."/>
            <person name="Zhong F."/>
            <person name="Delcher A.L."/>
            <person name="Huson D.H."/>
            <person name="Kravitz S.A."/>
            <person name="Mouchard L."/>
            <person name="Reinert K."/>
            <person name="Remington K.A."/>
            <person name="Clark A.G."/>
            <person name="Waterman M.S."/>
            <person name="Eichler E.E."/>
            <person name="Adams M.D."/>
            <person name="Hunkapiller M.W."/>
            <person name="Myers E.W."/>
            <person name="Venter J.C."/>
        </authorList>
    </citation>
    <scope>NUCLEOTIDE SEQUENCE [LARGE SCALE GENOMIC DNA]</scope>
</reference>
<reference key="4">
    <citation type="journal article" date="2004" name="Genome Res.">
        <title>The status, quality, and expansion of the NIH full-length cDNA project: the Mammalian Gene Collection (MGC).</title>
        <authorList>
            <consortium name="The MGC Project Team"/>
        </authorList>
    </citation>
    <scope>NUCLEOTIDE SEQUENCE [LARGE SCALE MRNA]</scope>
    <source>
        <tissue>Brain</tissue>
    </source>
</reference>
<accession>Q8IYR0</accession>
<accession>A8K969</accession>
<accession>E1P507</accession>
<accession>Q8N9U4</accession>
<protein>
    <recommendedName>
        <fullName evidence="3">Cilia- and flagella-associated protein 206</fullName>
    </recommendedName>
</protein>
<keyword id="KW-0966">Cell projection</keyword>
<keyword id="KW-0969">Cilium</keyword>
<keyword id="KW-0970">Cilium biogenesis/degradation</keyword>
<keyword id="KW-0963">Cytoplasm</keyword>
<keyword id="KW-0206">Cytoskeleton</keyword>
<keyword id="KW-1267">Proteomics identification</keyword>
<keyword id="KW-1185">Reference proteome</keyword>